<accession>C1CWJ7</accession>
<gene>
    <name evidence="1" type="primary">purH</name>
    <name type="ordered locus">Deide_16000</name>
</gene>
<keyword id="KW-0378">Hydrolase</keyword>
<keyword id="KW-0511">Multifunctional enzyme</keyword>
<keyword id="KW-0658">Purine biosynthesis</keyword>
<keyword id="KW-1185">Reference proteome</keyword>
<keyword id="KW-0808">Transferase</keyword>
<sequence length="510" mass="54521">MTKRALISVSDKTGVVEFARSLTARGWEVLSTGGTFQALQEAGVSVTQVSDVTGFPEMLDGRVKTLHPAVHGGILARREPQHLSQLEAQGFGTIDLVCVNLYPFRETVARGAPDPEVIENIDIGGPAMIRSAAKNHSGVLVLVDPADYPVALQDEVSGSERRRLAAKAYRHTSEYDAAITAYLEGASEELPTRLPERLTVDLHRVAQVRYGENPHQPGAVYRWGQARGPVMDAQVVAGKPMSFNNYADADAAWSLCQELAAQEDGAVCVAVKHANPCGVAVADDVRAAWERARDADTLSVFGGVVAVSRPVDFQAAQAMRGTFLEVLIAPEVTPDAVEWFAEKKPDLRVLVAAQASGVSVLDVRPLTGGFAVQERDTRPWDDLCPEVVTARQPTDQEWADLRFAWATVKHARSNAVVLARGGVTVGLGAGAVSRIWAAERAVANAGDKAQGAVLASEAFFPFDDVVRLAAQSGVTAILQPGGAKRDPEVIAAANELGVSMVFTGSRHFRH</sequence>
<organism>
    <name type="scientific">Deinococcus deserti (strain DSM 17065 / CIP 109153 / LMG 22923 / VCD115)</name>
    <dbReference type="NCBI Taxonomy" id="546414"/>
    <lineage>
        <taxon>Bacteria</taxon>
        <taxon>Thermotogati</taxon>
        <taxon>Deinococcota</taxon>
        <taxon>Deinococci</taxon>
        <taxon>Deinococcales</taxon>
        <taxon>Deinococcaceae</taxon>
        <taxon>Deinococcus</taxon>
    </lineage>
</organism>
<proteinExistence type="inferred from homology"/>
<comment type="catalytic activity">
    <reaction evidence="1">
        <text>(6R)-10-formyltetrahydrofolate + 5-amino-1-(5-phospho-beta-D-ribosyl)imidazole-4-carboxamide = 5-formamido-1-(5-phospho-D-ribosyl)imidazole-4-carboxamide + (6S)-5,6,7,8-tetrahydrofolate</text>
        <dbReference type="Rhea" id="RHEA:22192"/>
        <dbReference type="ChEBI" id="CHEBI:57453"/>
        <dbReference type="ChEBI" id="CHEBI:58467"/>
        <dbReference type="ChEBI" id="CHEBI:58475"/>
        <dbReference type="ChEBI" id="CHEBI:195366"/>
        <dbReference type="EC" id="2.1.2.3"/>
    </reaction>
</comment>
<comment type="catalytic activity">
    <reaction evidence="1">
        <text>IMP + H2O = 5-formamido-1-(5-phospho-D-ribosyl)imidazole-4-carboxamide</text>
        <dbReference type="Rhea" id="RHEA:18445"/>
        <dbReference type="ChEBI" id="CHEBI:15377"/>
        <dbReference type="ChEBI" id="CHEBI:58053"/>
        <dbReference type="ChEBI" id="CHEBI:58467"/>
        <dbReference type="EC" id="3.5.4.10"/>
    </reaction>
</comment>
<comment type="pathway">
    <text evidence="1">Purine metabolism; IMP biosynthesis via de novo pathway; 5-formamido-1-(5-phospho-D-ribosyl)imidazole-4-carboxamide from 5-amino-1-(5-phospho-D-ribosyl)imidazole-4-carboxamide (10-formyl THF route): step 1/1.</text>
</comment>
<comment type="pathway">
    <text evidence="1">Purine metabolism; IMP biosynthesis via de novo pathway; IMP from 5-formamido-1-(5-phospho-D-ribosyl)imidazole-4-carboxamide: step 1/1.</text>
</comment>
<comment type="domain">
    <text evidence="1">The IMP cyclohydrolase activity resides in the N-terminal region.</text>
</comment>
<comment type="similarity">
    <text evidence="1">Belongs to the PurH family.</text>
</comment>
<protein>
    <recommendedName>
        <fullName evidence="1">Bifunctional purine biosynthesis protein PurH</fullName>
    </recommendedName>
    <domain>
        <recommendedName>
            <fullName evidence="1">Phosphoribosylaminoimidazolecarboxamide formyltransferase</fullName>
            <ecNumber evidence="1">2.1.2.3</ecNumber>
        </recommendedName>
        <alternativeName>
            <fullName evidence="1">AICAR transformylase</fullName>
        </alternativeName>
    </domain>
    <domain>
        <recommendedName>
            <fullName evidence="1">IMP cyclohydrolase</fullName>
            <ecNumber evidence="1">3.5.4.10</ecNumber>
        </recommendedName>
        <alternativeName>
            <fullName evidence="1">ATIC</fullName>
        </alternativeName>
        <alternativeName>
            <fullName evidence="1">IMP synthase</fullName>
        </alternativeName>
        <alternativeName>
            <fullName evidence="1">Inosinicase</fullName>
        </alternativeName>
    </domain>
</protein>
<evidence type="ECO:0000255" key="1">
    <source>
        <dbReference type="HAMAP-Rule" id="MF_00139"/>
    </source>
</evidence>
<evidence type="ECO:0000255" key="2">
    <source>
        <dbReference type="PROSITE-ProRule" id="PRU01202"/>
    </source>
</evidence>
<dbReference type="EC" id="2.1.2.3" evidence="1"/>
<dbReference type="EC" id="3.5.4.10" evidence="1"/>
<dbReference type="EMBL" id="CP001114">
    <property type="protein sequence ID" value="ACO46564.1"/>
    <property type="molecule type" value="Genomic_DNA"/>
</dbReference>
<dbReference type="RefSeq" id="WP_012693687.1">
    <property type="nucleotide sequence ID" value="NC_012526.1"/>
</dbReference>
<dbReference type="SMR" id="C1CWJ7"/>
<dbReference type="STRING" id="546414.Deide_16000"/>
<dbReference type="PaxDb" id="546414-Deide_16000"/>
<dbReference type="KEGG" id="ddr:Deide_16000"/>
<dbReference type="eggNOG" id="COG0138">
    <property type="taxonomic scope" value="Bacteria"/>
</dbReference>
<dbReference type="HOGENOM" id="CLU_016316_5_2_0"/>
<dbReference type="OrthoDB" id="9802065at2"/>
<dbReference type="UniPathway" id="UPA00074">
    <property type="reaction ID" value="UER00133"/>
</dbReference>
<dbReference type="UniPathway" id="UPA00074">
    <property type="reaction ID" value="UER00135"/>
</dbReference>
<dbReference type="Proteomes" id="UP000002208">
    <property type="component" value="Chromosome"/>
</dbReference>
<dbReference type="GO" id="GO:0005829">
    <property type="term" value="C:cytosol"/>
    <property type="evidence" value="ECO:0007669"/>
    <property type="project" value="TreeGrafter"/>
</dbReference>
<dbReference type="GO" id="GO:0003937">
    <property type="term" value="F:IMP cyclohydrolase activity"/>
    <property type="evidence" value="ECO:0007669"/>
    <property type="project" value="UniProtKB-UniRule"/>
</dbReference>
<dbReference type="GO" id="GO:0004643">
    <property type="term" value="F:phosphoribosylaminoimidazolecarboxamide formyltransferase activity"/>
    <property type="evidence" value="ECO:0007669"/>
    <property type="project" value="UniProtKB-UniRule"/>
</dbReference>
<dbReference type="GO" id="GO:0006189">
    <property type="term" value="P:'de novo' IMP biosynthetic process"/>
    <property type="evidence" value="ECO:0007669"/>
    <property type="project" value="UniProtKB-UniRule"/>
</dbReference>
<dbReference type="CDD" id="cd01421">
    <property type="entry name" value="IMPCH"/>
    <property type="match status" value="1"/>
</dbReference>
<dbReference type="FunFam" id="3.40.140.20:FF:000001">
    <property type="entry name" value="Bifunctional purine biosynthesis protein PurH"/>
    <property type="match status" value="1"/>
</dbReference>
<dbReference type="FunFam" id="3.40.50.1380:FF:000001">
    <property type="entry name" value="Bifunctional purine biosynthesis protein PurH"/>
    <property type="match status" value="1"/>
</dbReference>
<dbReference type="Gene3D" id="3.40.140.20">
    <property type="match status" value="2"/>
</dbReference>
<dbReference type="Gene3D" id="3.40.50.1380">
    <property type="entry name" value="Methylglyoxal synthase-like domain"/>
    <property type="match status" value="1"/>
</dbReference>
<dbReference type="HAMAP" id="MF_00139">
    <property type="entry name" value="PurH"/>
    <property type="match status" value="1"/>
</dbReference>
<dbReference type="InterPro" id="IPR024051">
    <property type="entry name" value="AICAR_Tfase_dup_dom_sf"/>
</dbReference>
<dbReference type="InterPro" id="IPR016193">
    <property type="entry name" value="Cytidine_deaminase-like"/>
</dbReference>
<dbReference type="InterPro" id="IPR011607">
    <property type="entry name" value="MGS-like_dom"/>
</dbReference>
<dbReference type="InterPro" id="IPR036914">
    <property type="entry name" value="MGS-like_dom_sf"/>
</dbReference>
<dbReference type="InterPro" id="IPR002695">
    <property type="entry name" value="PurH-like"/>
</dbReference>
<dbReference type="NCBIfam" id="NF002049">
    <property type="entry name" value="PRK00881.1"/>
    <property type="match status" value="1"/>
</dbReference>
<dbReference type="NCBIfam" id="TIGR00355">
    <property type="entry name" value="purH"/>
    <property type="match status" value="1"/>
</dbReference>
<dbReference type="PANTHER" id="PTHR11692:SF0">
    <property type="entry name" value="BIFUNCTIONAL PURINE BIOSYNTHESIS PROTEIN ATIC"/>
    <property type="match status" value="1"/>
</dbReference>
<dbReference type="PANTHER" id="PTHR11692">
    <property type="entry name" value="BIFUNCTIONAL PURINE BIOSYNTHESIS PROTEIN PURH"/>
    <property type="match status" value="1"/>
</dbReference>
<dbReference type="Pfam" id="PF01808">
    <property type="entry name" value="AICARFT_IMPCHas"/>
    <property type="match status" value="1"/>
</dbReference>
<dbReference type="Pfam" id="PF02142">
    <property type="entry name" value="MGS"/>
    <property type="match status" value="1"/>
</dbReference>
<dbReference type="PIRSF" id="PIRSF000414">
    <property type="entry name" value="AICARFT_IMPCHas"/>
    <property type="match status" value="1"/>
</dbReference>
<dbReference type="SMART" id="SM00798">
    <property type="entry name" value="AICARFT_IMPCHas"/>
    <property type="match status" value="1"/>
</dbReference>
<dbReference type="SMART" id="SM00851">
    <property type="entry name" value="MGS"/>
    <property type="match status" value="1"/>
</dbReference>
<dbReference type="SUPFAM" id="SSF53927">
    <property type="entry name" value="Cytidine deaminase-like"/>
    <property type="match status" value="1"/>
</dbReference>
<dbReference type="SUPFAM" id="SSF52335">
    <property type="entry name" value="Methylglyoxal synthase-like"/>
    <property type="match status" value="1"/>
</dbReference>
<dbReference type="PROSITE" id="PS51855">
    <property type="entry name" value="MGS"/>
    <property type="match status" value="1"/>
</dbReference>
<feature type="chain" id="PRO_1000203248" description="Bifunctional purine biosynthesis protein PurH">
    <location>
        <begin position="1"/>
        <end position="510"/>
    </location>
</feature>
<feature type="domain" description="MGS-like" evidence="2">
    <location>
        <begin position="1"/>
        <end position="143"/>
    </location>
</feature>
<name>PUR9_DEIDV</name>
<reference key="1">
    <citation type="journal article" date="2009" name="PLoS Genet.">
        <title>Alliance of proteomics and genomics to unravel the specificities of Sahara bacterium Deinococcus deserti.</title>
        <authorList>
            <person name="de Groot A."/>
            <person name="Dulermo R."/>
            <person name="Ortet P."/>
            <person name="Blanchard L."/>
            <person name="Guerin P."/>
            <person name="Fernandez B."/>
            <person name="Vacherie B."/>
            <person name="Dossat C."/>
            <person name="Jolivet E."/>
            <person name="Siguier P."/>
            <person name="Chandler M."/>
            <person name="Barakat M."/>
            <person name="Dedieu A."/>
            <person name="Barbe V."/>
            <person name="Heulin T."/>
            <person name="Sommer S."/>
            <person name="Achouak W."/>
            <person name="Armengaud J."/>
        </authorList>
    </citation>
    <scope>NUCLEOTIDE SEQUENCE [LARGE SCALE GENOMIC DNA]</scope>
    <source>
        <strain>DSM 17065 / CIP 109153 / LMG 22923 / VCD115</strain>
    </source>
</reference>